<reference key="1">
    <citation type="journal article" date="2005" name="Proc. Natl. Acad. Sci. U.S.A.">
        <title>Comparison of the complete genome sequences of Pseudomonas syringae pv. syringae B728a and pv. tomato DC3000.</title>
        <authorList>
            <person name="Feil H."/>
            <person name="Feil W.S."/>
            <person name="Chain P."/>
            <person name="Larimer F."/>
            <person name="Dibartolo G."/>
            <person name="Copeland A."/>
            <person name="Lykidis A."/>
            <person name="Trong S."/>
            <person name="Nolan M."/>
            <person name="Goltsman E."/>
            <person name="Thiel J."/>
            <person name="Malfatti S."/>
            <person name="Loper J.E."/>
            <person name="Lapidus A."/>
            <person name="Detter J.C."/>
            <person name="Land M."/>
            <person name="Richardson P.M."/>
            <person name="Kyrpides N.C."/>
            <person name="Ivanova N."/>
            <person name="Lindow S.E."/>
        </authorList>
    </citation>
    <scope>NUCLEOTIDE SEQUENCE [LARGE SCALE GENOMIC DNA]</scope>
    <source>
        <strain>B728a</strain>
    </source>
</reference>
<feature type="chain" id="PRO_0000219947" description="PqqA peptide cyclase">
    <location>
        <begin position="1"/>
        <end position="389"/>
    </location>
</feature>
<feature type="domain" description="Radical SAM core" evidence="2">
    <location>
        <begin position="19"/>
        <end position="234"/>
    </location>
</feature>
<feature type="binding site" evidence="1">
    <location>
        <position position="33"/>
    </location>
    <ligand>
        <name>[4Fe-4S] cluster</name>
        <dbReference type="ChEBI" id="CHEBI:49883"/>
        <note>4Fe-4S-S-AdoMet</note>
    </ligand>
</feature>
<feature type="binding site" evidence="1">
    <location>
        <position position="37"/>
    </location>
    <ligand>
        <name>[4Fe-4S] cluster</name>
        <dbReference type="ChEBI" id="CHEBI:49883"/>
        <note>4Fe-4S-S-AdoMet</note>
    </ligand>
</feature>
<feature type="binding site" evidence="1">
    <location>
        <position position="40"/>
    </location>
    <ligand>
        <name>[4Fe-4S] cluster</name>
        <dbReference type="ChEBI" id="CHEBI:49883"/>
        <note>4Fe-4S-S-AdoMet</note>
    </ligand>
</feature>
<comment type="function">
    <text evidence="1">Catalyzes the cross-linking of a glutamate residue and a tyrosine residue in the PqqA protein as part of the biosynthesis of pyrroloquinoline quinone (PQQ).</text>
</comment>
<comment type="catalytic activity">
    <reaction evidence="1">
        <text>[PQQ precursor protein] + S-adenosyl-L-methionine = E-Y cross-linked-[PQQ precursor protein] + 5'-deoxyadenosine + L-methionine + H(+)</text>
        <dbReference type="Rhea" id="RHEA:56836"/>
        <dbReference type="Rhea" id="RHEA-COMP:14800"/>
        <dbReference type="Rhea" id="RHEA-COMP:14801"/>
        <dbReference type="ChEBI" id="CHEBI:15378"/>
        <dbReference type="ChEBI" id="CHEBI:17319"/>
        <dbReference type="ChEBI" id="CHEBI:57844"/>
        <dbReference type="ChEBI" id="CHEBI:59789"/>
        <dbReference type="ChEBI" id="CHEBI:141026"/>
        <dbReference type="ChEBI" id="CHEBI:141027"/>
        <dbReference type="EC" id="1.21.98.4"/>
    </reaction>
</comment>
<comment type="cofactor">
    <cofactor evidence="1">
        <name>[4Fe-4S] cluster</name>
        <dbReference type="ChEBI" id="CHEBI:49883"/>
    </cofactor>
    <text evidence="1">Binds 1 [4Fe-4S] cluster. The cluster is coordinated with 3 cysteines and an exchangeable S-adenosyl-L-methionine.</text>
</comment>
<comment type="pathway">
    <text evidence="1">Cofactor biosynthesis; pyrroloquinoline quinone biosynthesis.</text>
</comment>
<comment type="subunit">
    <text evidence="1">Interacts with PqqD. The interaction is necessary for activity of PqqE.</text>
</comment>
<comment type="similarity">
    <text evidence="1">Belongs to the radical SAM superfamily. PqqE family.</text>
</comment>
<accession>Q4ZMC1</accession>
<proteinExistence type="inferred from homology"/>
<name>PQQE_PSEU2</name>
<evidence type="ECO:0000255" key="1">
    <source>
        <dbReference type="HAMAP-Rule" id="MF_00660"/>
    </source>
</evidence>
<evidence type="ECO:0000255" key="2">
    <source>
        <dbReference type="PROSITE-ProRule" id="PRU01266"/>
    </source>
</evidence>
<dbReference type="EC" id="1.21.98.4" evidence="1"/>
<dbReference type="EMBL" id="CP000075">
    <property type="protein sequence ID" value="AAY39701.1"/>
    <property type="molecule type" value="Genomic_DNA"/>
</dbReference>
<dbReference type="RefSeq" id="WP_011269165.1">
    <property type="nucleotide sequence ID" value="NC_007005.1"/>
</dbReference>
<dbReference type="RefSeq" id="YP_237739.1">
    <property type="nucleotide sequence ID" value="NC_007005.1"/>
</dbReference>
<dbReference type="SMR" id="Q4ZMC1"/>
<dbReference type="STRING" id="205918.Psyr_4674"/>
<dbReference type="KEGG" id="psb:Psyr_4674"/>
<dbReference type="PATRIC" id="fig|205918.7.peg.4820"/>
<dbReference type="eggNOG" id="COG0535">
    <property type="taxonomic scope" value="Bacteria"/>
</dbReference>
<dbReference type="HOGENOM" id="CLU_009273_4_7_6"/>
<dbReference type="OrthoDB" id="9792276at2"/>
<dbReference type="UniPathway" id="UPA00539"/>
<dbReference type="Proteomes" id="UP000000426">
    <property type="component" value="Chromosome"/>
</dbReference>
<dbReference type="GO" id="GO:0051539">
    <property type="term" value="F:4 iron, 4 sulfur cluster binding"/>
    <property type="evidence" value="ECO:0007669"/>
    <property type="project" value="UniProtKB-KW"/>
</dbReference>
<dbReference type="GO" id="GO:0009975">
    <property type="term" value="F:cyclase activity"/>
    <property type="evidence" value="ECO:0007669"/>
    <property type="project" value="UniProtKB-UniRule"/>
</dbReference>
<dbReference type="GO" id="GO:0005506">
    <property type="term" value="F:iron ion binding"/>
    <property type="evidence" value="ECO:0007669"/>
    <property type="project" value="UniProtKB-UniRule"/>
</dbReference>
<dbReference type="GO" id="GO:0016491">
    <property type="term" value="F:oxidoreductase activity"/>
    <property type="evidence" value="ECO:0007669"/>
    <property type="project" value="UniProtKB-KW"/>
</dbReference>
<dbReference type="GO" id="GO:1904047">
    <property type="term" value="F:S-adenosyl-L-methionine binding"/>
    <property type="evidence" value="ECO:0007669"/>
    <property type="project" value="UniProtKB-UniRule"/>
</dbReference>
<dbReference type="GO" id="GO:0018189">
    <property type="term" value="P:pyrroloquinoline quinone biosynthetic process"/>
    <property type="evidence" value="ECO:0007669"/>
    <property type="project" value="UniProtKB-UniRule"/>
</dbReference>
<dbReference type="CDD" id="cd01335">
    <property type="entry name" value="Radical_SAM"/>
    <property type="match status" value="1"/>
</dbReference>
<dbReference type="CDD" id="cd21119">
    <property type="entry name" value="SPASM_PqqE"/>
    <property type="match status" value="1"/>
</dbReference>
<dbReference type="Gene3D" id="3.20.20.70">
    <property type="entry name" value="Aldolase class I"/>
    <property type="match status" value="1"/>
</dbReference>
<dbReference type="HAMAP" id="MF_00660">
    <property type="entry name" value="PqqE"/>
    <property type="match status" value="1"/>
</dbReference>
<dbReference type="InterPro" id="IPR023885">
    <property type="entry name" value="4Fe4S-binding_SPASM_dom"/>
</dbReference>
<dbReference type="InterPro" id="IPR013785">
    <property type="entry name" value="Aldolase_TIM"/>
</dbReference>
<dbReference type="InterPro" id="IPR006638">
    <property type="entry name" value="Elp3/MiaA/NifB-like_rSAM"/>
</dbReference>
<dbReference type="InterPro" id="IPR000385">
    <property type="entry name" value="MoaA_NifB_PqqE_Fe-S-bd_CS"/>
</dbReference>
<dbReference type="InterPro" id="IPR011843">
    <property type="entry name" value="PQQ_synth_PqqE_bac"/>
</dbReference>
<dbReference type="InterPro" id="IPR017200">
    <property type="entry name" value="PqqE-like"/>
</dbReference>
<dbReference type="InterPro" id="IPR050377">
    <property type="entry name" value="Radical_SAM_PqqE_MftC-like"/>
</dbReference>
<dbReference type="InterPro" id="IPR007197">
    <property type="entry name" value="rSAM"/>
</dbReference>
<dbReference type="NCBIfam" id="TIGR02109">
    <property type="entry name" value="PQQ_syn_pqqE"/>
    <property type="match status" value="1"/>
</dbReference>
<dbReference type="NCBIfam" id="TIGR04085">
    <property type="entry name" value="rSAM_more_4Fe4S"/>
    <property type="match status" value="1"/>
</dbReference>
<dbReference type="PANTHER" id="PTHR11228:SF7">
    <property type="entry name" value="PQQA PEPTIDE CYCLASE"/>
    <property type="match status" value="1"/>
</dbReference>
<dbReference type="PANTHER" id="PTHR11228">
    <property type="entry name" value="RADICAL SAM DOMAIN PROTEIN"/>
    <property type="match status" value="1"/>
</dbReference>
<dbReference type="Pfam" id="PF13353">
    <property type="entry name" value="Fer4_12"/>
    <property type="match status" value="1"/>
</dbReference>
<dbReference type="Pfam" id="PF04055">
    <property type="entry name" value="Radical_SAM"/>
    <property type="match status" value="1"/>
</dbReference>
<dbReference type="Pfam" id="PF13186">
    <property type="entry name" value="SPASM"/>
    <property type="match status" value="1"/>
</dbReference>
<dbReference type="PIRSF" id="PIRSF037420">
    <property type="entry name" value="PQQ_syn_pqqE"/>
    <property type="match status" value="1"/>
</dbReference>
<dbReference type="SFLD" id="SFLDF00280">
    <property type="entry name" value="coenzyme_PQQ_synthesis_protein"/>
    <property type="match status" value="1"/>
</dbReference>
<dbReference type="SFLD" id="SFLDG01386">
    <property type="entry name" value="main_SPASM_domain-containing"/>
    <property type="match status" value="1"/>
</dbReference>
<dbReference type="SMART" id="SM00729">
    <property type="entry name" value="Elp3"/>
    <property type="match status" value="1"/>
</dbReference>
<dbReference type="SUPFAM" id="SSF102114">
    <property type="entry name" value="Radical SAM enzymes"/>
    <property type="match status" value="1"/>
</dbReference>
<dbReference type="PROSITE" id="PS01305">
    <property type="entry name" value="MOAA_NIFB_PQQE"/>
    <property type="match status" value="1"/>
</dbReference>
<dbReference type="PROSITE" id="PS51918">
    <property type="entry name" value="RADICAL_SAM"/>
    <property type="match status" value="1"/>
</dbReference>
<keyword id="KW-0004">4Fe-4S</keyword>
<keyword id="KW-0408">Iron</keyword>
<keyword id="KW-0411">Iron-sulfur</keyword>
<keyword id="KW-0479">Metal-binding</keyword>
<keyword id="KW-0560">Oxidoreductase</keyword>
<keyword id="KW-0884">PQQ biosynthesis</keyword>
<keyword id="KW-0949">S-adenosyl-L-methionine</keyword>
<organism>
    <name type="scientific">Pseudomonas syringae pv. syringae (strain B728a)</name>
    <dbReference type="NCBI Taxonomy" id="205918"/>
    <lineage>
        <taxon>Bacteria</taxon>
        <taxon>Pseudomonadati</taxon>
        <taxon>Pseudomonadota</taxon>
        <taxon>Gammaproteobacteria</taxon>
        <taxon>Pseudomonadales</taxon>
        <taxon>Pseudomonadaceae</taxon>
        <taxon>Pseudomonas</taxon>
        <taxon>Pseudomonas syringae</taxon>
    </lineage>
</organism>
<protein>
    <recommendedName>
        <fullName evidence="1">PqqA peptide cyclase</fullName>
        <ecNumber evidence="1">1.21.98.4</ecNumber>
    </recommendedName>
    <alternativeName>
        <fullName evidence="1">Coenzyme PQQ synthesis protein E</fullName>
    </alternativeName>
    <alternativeName>
        <fullName evidence="1">Pyrroloquinoline quinone biosynthesis protein E</fullName>
    </alternativeName>
</protein>
<sequence>MSDIAPVTNTPYIPPTPEVGLPLWLLAELTYRCPLQCPYCSNPLDFAKQGQELSTEQWFKVMQEAREMGAAQIGFSGGEPLVRQDLAELIAEARRLGFYTNLITSGIGLTEEKIIAFKEAGLDHIQISFQASDEQVNNMLAGSKKAFAQKLEMARAVKRHGYPMVLNFVTHRHNIDRIDKIIELCLALEADFVELATCQFYGWAHLNRLGLLPTKDQLVRAEAVTNEYRARLEAENHPCKLIFVTPDYYEERPKACMNGWGNIFLTVTPDGTALPCHGARQMPIQFPNVRDHSMQHIWYDSFGFNRFRGYDWMPEPCRSCDEKEKDFGGCRCQAFMLTGDAANADPVCSKSYHHGIITQARDESETATQTIEELAFRNDRNSRLIAKSS</sequence>
<gene>
    <name evidence="1" type="primary">pqqE</name>
    <name type="ordered locus">Psyr_4674</name>
</gene>